<sequence>MRTYLDLLQHVLDHGVDRDDRTGTGTRSVFGYQMRFDLEEGFPVLTTKKLHLRSIIHELLWFLKGDTNIAYLKENGVTIWDEWADENGDLGPVYGYQWRSWPAPDGRHIDQIANLLKMLHTNPQSRSLIVSAWNPALVDEMALPPCHCLFQFYVANGRLSCQLYQRSADIFLGVPFNIASYALLTMMIAQVTGLKPGEFIHTLGDAHIYSNHFEQARLQLTRTPKKLPVMHINPDVKDLFAFRFEDFRLDGYEADPTIKAPIAV</sequence>
<dbReference type="EC" id="2.1.1.45" evidence="1"/>
<dbReference type="EMBL" id="CP000872">
    <property type="protein sequence ID" value="ABX62462.1"/>
    <property type="molecule type" value="Genomic_DNA"/>
</dbReference>
<dbReference type="RefSeq" id="WP_012219669.1">
    <property type="nucleotide sequence ID" value="NC_010103.1"/>
</dbReference>
<dbReference type="SMR" id="A9M657"/>
<dbReference type="GeneID" id="55591055"/>
<dbReference type="KEGG" id="bcs:BCAN_A1431"/>
<dbReference type="HOGENOM" id="CLU_021669_0_0_5"/>
<dbReference type="PhylomeDB" id="A9M657"/>
<dbReference type="UniPathway" id="UPA00575"/>
<dbReference type="Proteomes" id="UP000001385">
    <property type="component" value="Chromosome I"/>
</dbReference>
<dbReference type="GO" id="GO:0005829">
    <property type="term" value="C:cytosol"/>
    <property type="evidence" value="ECO:0007669"/>
    <property type="project" value="TreeGrafter"/>
</dbReference>
<dbReference type="GO" id="GO:0004799">
    <property type="term" value="F:thymidylate synthase activity"/>
    <property type="evidence" value="ECO:0007669"/>
    <property type="project" value="UniProtKB-UniRule"/>
</dbReference>
<dbReference type="GO" id="GO:0006231">
    <property type="term" value="P:dTMP biosynthetic process"/>
    <property type="evidence" value="ECO:0007669"/>
    <property type="project" value="UniProtKB-UniRule"/>
</dbReference>
<dbReference type="GO" id="GO:0006235">
    <property type="term" value="P:dTTP biosynthetic process"/>
    <property type="evidence" value="ECO:0007669"/>
    <property type="project" value="UniProtKB-UniRule"/>
</dbReference>
<dbReference type="GO" id="GO:0032259">
    <property type="term" value="P:methylation"/>
    <property type="evidence" value="ECO:0007669"/>
    <property type="project" value="UniProtKB-KW"/>
</dbReference>
<dbReference type="CDD" id="cd00351">
    <property type="entry name" value="TS_Pyrimidine_HMase"/>
    <property type="match status" value="1"/>
</dbReference>
<dbReference type="FunFam" id="3.30.572.10:FF:000001">
    <property type="entry name" value="Thymidylate synthase"/>
    <property type="match status" value="1"/>
</dbReference>
<dbReference type="Gene3D" id="3.30.572.10">
    <property type="entry name" value="Thymidylate synthase/dCMP hydroxymethylase domain"/>
    <property type="match status" value="1"/>
</dbReference>
<dbReference type="HAMAP" id="MF_00008">
    <property type="entry name" value="Thymidy_synth_bact"/>
    <property type="match status" value="1"/>
</dbReference>
<dbReference type="InterPro" id="IPR045097">
    <property type="entry name" value="Thymidate_synth/dCMP_Mease"/>
</dbReference>
<dbReference type="InterPro" id="IPR023451">
    <property type="entry name" value="Thymidate_synth/dCMP_Mease_dom"/>
</dbReference>
<dbReference type="InterPro" id="IPR036926">
    <property type="entry name" value="Thymidate_synth/dCMP_Mease_sf"/>
</dbReference>
<dbReference type="InterPro" id="IPR000398">
    <property type="entry name" value="Thymidylate_synthase"/>
</dbReference>
<dbReference type="InterPro" id="IPR020940">
    <property type="entry name" value="Thymidylate_synthase_AS"/>
</dbReference>
<dbReference type="NCBIfam" id="NF002497">
    <property type="entry name" value="PRK01827.1-3"/>
    <property type="match status" value="1"/>
</dbReference>
<dbReference type="NCBIfam" id="NF002499">
    <property type="entry name" value="PRK01827.1-5"/>
    <property type="match status" value="1"/>
</dbReference>
<dbReference type="NCBIfam" id="TIGR03284">
    <property type="entry name" value="thym_sym"/>
    <property type="match status" value="2"/>
</dbReference>
<dbReference type="PANTHER" id="PTHR11548:SF9">
    <property type="entry name" value="THYMIDYLATE SYNTHASE"/>
    <property type="match status" value="1"/>
</dbReference>
<dbReference type="PANTHER" id="PTHR11548">
    <property type="entry name" value="THYMIDYLATE SYNTHASE 1"/>
    <property type="match status" value="1"/>
</dbReference>
<dbReference type="Pfam" id="PF00303">
    <property type="entry name" value="Thymidylat_synt"/>
    <property type="match status" value="1"/>
</dbReference>
<dbReference type="PRINTS" id="PR00108">
    <property type="entry name" value="THYMDSNTHASE"/>
</dbReference>
<dbReference type="SUPFAM" id="SSF55831">
    <property type="entry name" value="Thymidylate synthase/dCMP hydroxymethylase"/>
    <property type="match status" value="1"/>
</dbReference>
<dbReference type="PROSITE" id="PS00091">
    <property type="entry name" value="THYMIDYLATE_SYNTHASE"/>
    <property type="match status" value="1"/>
</dbReference>
<accession>A9M657</accession>
<evidence type="ECO:0000255" key="1">
    <source>
        <dbReference type="HAMAP-Rule" id="MF_00008"/>
    </source>
</evidence>
<gene>
    <name evidence="1" type="primary">thyA</name>
    <name type="ordered locus">BCAN_A1431</name>
</gene>
<organism>
    <name type="scientific">Brucella canis (strain ATCC 23365 / NCTC 10854 / RM-666)</name>
    <dbReference type="NCBI Taxonomy" id="483179"/>
    <lineage>
        <taxon>Bacteria</taxon>
        <taxon>Pseudomonadati</taxon>
        <taxon>Pseudomonadota</taxon>
        <taxon>Alphaproteobacteria</taxon>
        <taxon>Hyphomicrobiales</taxon>
        <taxon>Brucellaceae</taxon>
        <taxon>Brucella/Ochrobactrum group</taxon>
        <taxon>Brucella</taxon>
    </lineage>
</organism>
<proteinExistence type="inferred from homology"/>
<protein>
    <recommendedName>
        <fullName evidence="1">Thymidylate synthase</fullName>
        <shortName evidence="1">TS</shortName>
        <shortName evidence="1">TSase</shortName>
        <ecNumber evidence="1">2.1.1.45</ecNumber>
    </recommendedName>
</protein>
<keyword id="KW-0963">Cytoplasm</keyword>
<keyword id="KW-0489">Methyltransferase</keyword>
<keyword id="KW-0545">Nucleotide biosynthesis</keyword>
<keyword id="KW-1185">Reference proteome</keyword>
<keyword id="KW-0808">Transferase</keyword>
<feature type="chain" id="PRO_1000073869" description="Thymidylate synthase">
    <location>
        <begin position="1"/>
        <end position="264"/>
    </location>
</feature>
<feature type="active site" description="Nucleophile" evidence="1">
    <location>
        <position position="146"/>
    </location>
</feature>
<feature type="binding site" evidence="1">
    <location>
        <position position="21"/>
    </location>
    <ligand>
        <name>dUMP</name>
        <dbReference type="ChEBI" id="CHEBI:246422"/>
    </ligand>
</feature>
<feature type="binding site" evidence="1">
    <location>
        <position position="51"/>
    </location>
    <ligand>
        <name>(6R)-5,10-methylene-5,6,7,8-tetrahydrofolate</name>
        <dbReference type="ChEBI" id="CHEBI:15636"/>
    </ligand>
</feature>
<feature type="binding site" evidence="1">
    <location>
        <begin position="166"/>
        <end position="169"/>
    </location>
    <ligand>
        <name>dUMP</name>
        <dbReference type="ChEBI" id="CHEBI:246422"/>
    </ligand>
</feature>
<feature type="binding site" evidence="1">
    <location>
        <position position="169"/>
    </location>
    <ligand>
        <name>(6R)-5,10-methylene-5,6,7,8-tetrahydrofolate</name>
        <dbReference type="ChEBI" id="CHEBI:15636"/>
    </ligand>
</feature>
<feature type="binding site" evidence="1">
    <location>
        <position position="177"/>
    </location>
    <ligand>
        <name>dUMP</name>
        <dbReference type="ChEBI" id="CHEBI:246422"/>
    </ligand>
</feature>
<feature type="binding site" evidence="1">
    <location>
        <begin position="207"/>
        <end position="209"/>
    </location>
    <ligand>
        <name>dUMP</name>
        <dbReference type="ChEBI" id="CHEBI:246422"/>
    </ligand>
</feature>
<feature type="binding site" evidence="1">
    <location>
        <position position="263"/>
    </location>
    <ligand>
        <name>(6R)-5,10-methylene-5,6,7,8-tetrahydrofolate</name>
        <dbReference type="ChEBI" id="CHEBI:15636"/>
    </ligand>
</feature>
<reference key="1">
    <citation type="submission" date="2007-10" db="EMBL/GenBank/DDBJ databases">
        <title>Brucella canis ATCC 23365 whole genome shotgun sequencing project.</title>
        <authorList>
            <person name="Setubal J.C."/>
            <person name="Bowns C."/>
            <person name="Boyle S."/>
            <person name="Crasta O.R."/>
            <person name="Czar M.J."/>
            <person name="Dharmanolla C."/>
            <person name="Gillespie J.J."/>
            <person name="Kenyon R.W."/>
            <person name="Lu J."/>
            <person name="Mane S."/>
            <person name="Mohapatra S."/>
            <person name="Nagrani S."/>
            <person name="Purkayastha A."/>
            <person name="Rajasimha H.K."/>
            <person name="Shallom J.M."/>
            <person name="Shallom S."/>
            <person name="Shukla M."/>
            <person name="Snyder E.E."/>
            <person name="Sobral B.W."/>
            <person name="Wattam A.R."/>
            <person name="Will R."/>
            <person name="Williams K."/>
            <person name="Yoo H."/>
            <person name="Bruce D."/>
            <person name="Detter C."/>
            <person name="Munk C."/>
            <person name="Brettin T.S."/>
        </authorList>
    </citation>
    <scope>NUCLEOTIDE SEQUENCE [LARGE SCALE GENOMIC DNA]</scope>
    <source>
        <strain>ATCC 23365 / NCTC 10854 / RM-666</strain>
    </source>
</reference>
<comment type="function">
    <text evidence="1">Catalyzes the reductive methylation of 2'-deoxyuridine-5'-monophosphate (dUMP) to 2'-deoxythymidine-5'-monophosphate (dTMP) while utilizing 5,10-methylenetetrahydrofolate (mTHF) as the methyl donor and reductant in the reaction, yielding dihydrofolate (DHF) as a by-product. This enzymatic reaction provides an intracellular de novo source of dTMP, an essential precursor for DNA biosynthesis.</text>
</comment>
<comment type="catalytic activity">
    <reaction evidence="1">
        <text>dUMP + (6R)-5,10-methylene-5,6,7,8-tetrahydrofolate = 7,8-dihydrofolate + dTMP</text>
        <dbReference type="Rhea" id="RHEA:12104"/>
        <dbReference type="ChEBI" id="CHEBI:15636"/>
        <dbReference type="ChEBI" id="CHEBI:57451"/>
        <dbReference type="ChEBI" id="CHEBI:63528"/>
        <dbReference type="ChEBI" id="CHEBI:246422"/>
        <dbReference type="EC" id="2.1.1.45"/>
    </reaction>
</comment>
<comment type="pathway">
    <text evidence="1">Pyrimidine metabolism; dTTP biosynthesis.</text>
</comment>
<comment type="subunit">
    <text evidence="1">Homodimer.</text>
</comment>
<comment type="subcellular location">
    <subcellularLocation>
        <location evidence="1">Cytoplasm</location>
    </subcellularLocation>
</comment>
<comment type="similarity">
    <text evidence="1">Belongs to the thymidylate synthase family. Bacterial-type ThyA subfamily.</text>
</comment>
<name>TYSY_BRUC2</name>